<feature type="chain" id="PRO_0000229776" description="Protein BEX2">
    <location>
        <begin position="1"/>
        <end position="128"/>
    </location>
</feature>
<feature type="region of interest" description="Disordered" evidence="5">
    <location>
        <begin position="1"/>
        <end position="44"/>
    </location>
</feature>
<feature type="region of interest" description="Disordered" evidence="5">
    <location>
        <begin position="103"/>
        <end position="128"/>
    </location>
</feature>
<feature type="region of interest" description="His cluster" evidence="4">
    <location>
        <begin position="117"/>
        <end position="121"/>
    </location>
</feature>
<feature type="compositionally biased region" description="Basic and acidic residues" evidence="5">
    <location>
        <begin position="20"/>
        <end position="33"/>
    </location>
</feature>
<feature type="compositionally biased region" description="Basic and acidic residues" evidence="5">
    <location>
        <begin position="115"/>
        <end position="128"/>
    </location>
</feature>
<feature type="binding site" evidence="4">
    <location>
        <position position="125"/>
    </location>
    <ligand>
        <name>Zn(2+)</name>
        <dbReference type="ChEBI" id="CHEBI:29105"/>
        <note>ligand shared with FEM1B</note>
    </ligand>
</feature>
<feature type="modified residue" description="Omega-N-methylarginine" evidence="3">
    <location>
        <position position="50"/>
    </location>
</feature>
<reference key="1">
    <citation type="submission" date="2005-11" db="EMBL/GenBank/DDBJ databases">
        <authorList>
            <consortium name="NIH - Mammalian Gene Collection (MGC) project"/>
        </authorList>
    </citation>
    <scope>NUCLEOTIDE SEQUENCE [LARGE SCALE MRNA]</scope>
    <source>
        <strain>Crossbred X Angus</strain>
        <tissue>Liver</tissue>
    </source>
</reference>
<dbReference type="EMBL" id="BC109609">
    <property type="protein sequence ID" value="AAI09610.1"/>
    <property type="molecule type" value="mRNA"/>
</dbReference>
<dbReference type="RefSeq" id="NP_001070502.1">
    <property type="nucleotide sequence ID" value="NM_001077034.1"/>
</dbReference>
<dbReference type="RefSeq" id="XP_005227814.1">
    <property type="nucleotide sequence ID" value="XM_005227757.3"/>
</dbReference>
<dbReference type="FunCoup" id="Q2TBV0">
    <property type="interactions" value="196"/>
</dbReference>
<dbReference type="STRING" id="9913.ENSBTAP00000043951"/>
<dbReference type="PaxDb" id="9913-ENSBTAP00000043951"/>
<dbReference type="Ensembl" id="ENSBTAT00000046677.5">
    <property type="protein sequence ID" value="ENSBTAP00000043951.3"/>
    <property type="gene ID" value="ENSBTAG00000032875.5"/>
</dbReference>
<dbReference type="Ensembl" id="ENSBTAT00000133479.1">
    <property type="protein sequence ID" value="ENSBTAP00000102727.1"/>
    <property type="gene ID" value="ENSBTAG00000032875.5"/>
</dbReference>
<dbReference type="GeneID" id="767968"/>
<dbReference type="KEGG" id="bta:767968"/>
<dbReference type="VEuPathDB" id="HostDB:ENSBTAG00000032875"/>
<dbReference type="eggNOG" id="ENOG502RW3Y">
    <property type="taxonomic scope" value="Eukaryota"/>
</dbReference>
<dbReference type="GeneTree" id="ENSGT00940000153412"/>
<dbReference type="HOGENOM" id="CLU_123122_1_0_1"/>
<dbReference type="InParanoid" id="Q2TBV0"/>
<dbReference type="OMA" id="GKPQARM"/>
<dbReference type="OrthoDB" id="9833968at2759"/>
<dbReference type="TreeFam" id="TF337909"/>
<dbReference type="Proteomes" id="UP000009136">
    <property type="component" value="Chromosome X"/>
</dbReference>
<dbReference type="Bgee" id="ENSBTAG00000032875">
    <property type="expression patterns" value="Expressed in adenohypophysis and 73 other cell types or tissues"/>
</dbReference>
<dbReference type="GO" id="GO:0005737">
    <property type="term" value="C:cytoplasm"/>
    <property type="evidence" value="ECO:0000318"/>
    <property type="project" value="GO_Central"/>
</dbReference>
<dbReference type="GO" id="GO:0005634">
    <property type="term" value="C:nucleus"/>
    <property type="evidence" value="ECO:0000318"/>
    <property type="project" value="GO_Central"/>
</dbReference>
<dbReference type="GO" id="GO:0046872">
    <property type="term" value="F:metal ion binding"/>
    <property type="evidence" value="ECO:0007669"/>
    <property type="project" value="UniProtKB-KW"/>
</dbReference>
<dbReference type="GO" id="GO:0140678">
    <property type="term" value="F:molecular function inhibitor activity"/>
    <property type="evidence" value="ECO:0000250"/>
    <property type="project" value="UniProtKB"/>
</dbReference>
<dbReference type="GO" id="GO:0005102">
    <property type="term" value="F:signaling receptor binding"/>
    <property type="evidence" value="ECO:0000318"/>
    <property type="project" value="GO_Central"/>
</dbReference>
<dbReference type="GO" id="GO:0006915">
    <property type="term" value="P:apoptotic process"/>
    <property type="evidence" value="ECO:0007669"/>
    <property type="project" value="UniProtKB-KW"/>
</dbReference>
<dbReference type="GO" id="GO:0031397">
    <property type="term" value="P:negative regulation of protein ubiquitination"/>
    <property type="evidence" value="ECO:0000250"/>
    <property type="project" value="UniProtKB"/>
</dbReference>
<dbReference type="GO" id="GO:0007165">
    <property type="term" value="P:signal transduction"/>
    <property type="evidence" value="ECO:0000318"/>
    <property type="project" value="GO_Central"/>
</dbReference>
<dbReference type="InterPro" id="IPR007623">
    <property type="entry name" value="BEX"/>
</dbReference>
<dbReference type="InterPro" id="IPR021156">
    <property type="entry name" value="TF_A-like/BEX"/>
</dbReference>
<dbReference type="PANTHER" id="PTHR19430:SF3">
    <property type="entry name" value="PROTEIN BEX1"/>
    <property type="match status" value="1"/>
</dbReference>
<dbReference type="PANTHER" id="PTHR19430">
    <property type="entry name" value="PROTEIN BEX1-RELATED"/>
    <property type="match status" value="1"/>
</dbReference>
<dbReference type="Pfam" id="PF04538">
    <property type="entry name" value="BEX"/>
    <property type="match status" value="1"/>
</dbReference>
<dbReference type="PIRSF" id="PIRSF008633">
    <property type="entry name" value="BEX"/>
    <property type="match status" value="1"/>
</dbReference>
<sequence length="128" mass="15236">MMPKEEQVLKNLTMENANEENEKKDEKEQDANKGEPLALSLGAGEYCVPRGNRRRFRVRQPILHYRWDMTQRLGKPQARMREENIERIGEEMRQLMEKLREKQLSHSLRAVSTDPPHHEHNDEFCLMP</sequence>
<protein>
    <recommendedName>
        <fullName>Protein BEX2</fullName>
    </recommendedName>
    <alternativeName>
        <fullName>Brain-expressed X-linked protein 2 homolog</fullName>
    </alternativeName>
</protein>
<accession>Q2TBV0</accession>
<evidence type="ECO:0000250" key="1">
    <source>
        <dbReference type="UniProtKB" id="Q3MKQ1"/>
    </source>
</evidence>
<evidence type="ECO:0000250" key="2">
    <source>
        <dbReference type="UniProtKB" id="Q9BXY8"/>
    </source>
</evidence>
<evidence type="ECO:0000250" key="3">
    <source>
        <dbReference type="UniProtKB" id="Q9WTZ8"/>
    </source>
</evidence>
<evidence type="ECO:0000250" key="4">
    <source>
        <dbReference type="UniProtKB" id="Q9WTZ9"/>
    </source>
</evidence>
<evidence type="ECO:0000256" key="5">
    <source>
        <dbReference type="SAM" id="MobiDB-lite"/>
    </source>
</evidence>
<evidence type="ECO:0000305" key="6"/>
<proteinExistence type="evidence at transcript level"/>
<gene>
    <name type="primary">BEX2</name>
</gene>
<organism>
    <name type="scientific">Bos taurus</name>
    <name type="common">Bovine</name>
    <dbReference type="NCBI Taxonomy" id="9913"/>
    <lineage>
        <taxon>Eukaryota</taxon>
        <taxon>Metazoa</taxon>
        <taxon>Chordata</taxon>
        <taxon>Craniata</taxon>
        <taxon>Vertebrata</taxon>
        <taxon>Euteleostomi</taxon>
        <taxon>Mammalia</taxon>
        <taxon>Eutheria</taxon>
        <taxon>Laurasiatheria</taxon>
        <taxon>Artiodactyla</taxon>
        <taxon>Ruminantia</taxon>
        <taxon>Pecora</taxon>
        <taxon>Bovidae</taxon>
        <taxon>Bovinae</taxon>
        <taxon>Bos</taxon>
    </lineage>
</organism>
<keyword id="KW-0053">Apoptosis</keyword>
<keyword id="KW-0131">Cell cycle</keyword>
<keyword id="KW-0963">Cytoplasm</keyword>
<keyword id="KW-0479">Metal-binding</keyword>
<keyword id="KW-0488">Methylation</keyword>
<keyword id="KW-0539">Nucleus</keyword>
<keyword id="KW-1185">Reference proteome</keyword>
<keyword id="KW-0862">Zinc</keyword>
<comment type="function">
    <text evidence="2 3">Regulator of mitochondrial apoptosis and G1 cell cycle. Regulates the level of PP2A regulatory subunit B and PP2A phosphatase activity (By similarity). In absence of reductive stress, acts as a pseudosubstrate for the CRL2(FEM1B) complex: associates with FEM1B via zinc, thereby preventing association between FEM1B and its substrates (By similarity).</text>
</comment>
<comment type="subunit">
    <text evidence="2 3">Interacts with LMO2, possibly leading to regulate the transcriptional activity of a DNA-binding complex containing LMO2 (By similarity). Interacts with OMP (By similarity).</text>
</comment>
<comment type="subcellular location">
    <subcellularLocation>
        <location evidence="1">Cytoplasm</location>
    </subcellularLocation>
    <subcellularLocation>
        <location evidence="2">Nucleus</location>
    </subcellularLocation>
</comment>
<comment type="domain">
    <text evidence="4">The histidine cluster (His cluster) and Cys-125 mediate zinc-binding.</text>
</comment>
<comment type="similarity">
    <text evidence="6">Belongs to the BEX family.</text>
</comment>
<name>BEX2_BOVIN</name>